<accession>Q9W719</accession>
<organism>
    <name type="scientific">Gallus gallus</name>
    <name type="common">Chicken</name>
    <dbReference type="NCBI Taxonomy" id="9031"/>
    <lineage>
        <taxon>Eukaryota</taxon>
        <taxon>Metazoa</taxon>
        <taxon>Chordata</taxon>
        <taxon>Craniata</taxon>
        <taxon>Vertebrata</taxon>
        <taxon>Euteleostomi</taxon>
        <taxon>Archelosauria</taxon>
        <taxon>Archosauria</taxon>
        <taxon>Dinosauria</taxon>
        <taxon>Saurischia</taxon>
        <taxon>Theropoda</taxon>
        <taxon>Coelurosauria</taxon>
        <taxon>Aves</taxon>
        <taxon>Neognathae</taxon>
        <taxon>Galloanserae</taxon>
        <taxon>Galliformes</taxon>
        <taxon>Phasianidae</taxon>
        <taxon>Phasianinae</taxon>
        <taxon>Gallus</taxon>
    </lineage>
</organism>
<feature type="chain" id="PRO_0000139592" description="Hypoxanthine-guanine phosphoribosyltransferase">
    <location>
        <begin position="1"/>
        <end position="218"/>
    </location>
</feature>
<feature type="active site" description="Proton acceptor" evidence="1">
    <location>
        <position position="138"/>
    </location>
</feature>
<feature type="binding site" evidence="1">
    <location>
        <position position="69"/>
    </location>
    <ligand>
        <name>GMP</name>
        <dbReference type="ChEBI" id="CHEBI:58115"/>
    </ligand>
</feature>
<feature type="binding site" evidence="1">
    <location>
        <begin position="134"/>
        <end position="142"/>
    </location>
    <ligand>
        <name>GMP</name>
        <dbReference type="ChEBI" id="CHEBI:58115"/>
    </ligand>
</feature>
<feature type="binding site" evidence="1">
    <location>
        <position position="166"/>
    </location>
    <ligand>
        <name>GMP</name>
        <dbReference type="ChEBI" id="CHEBI:58115"/>
    </ligand>
</feature>
<feature type="binding site" evidence="1">
    <location>
        <begin position="186"/>
        <end position="188"/>
    </location>
    <ligand>
        <name>GMP</name>
        <dbReference type="ChEBI" id="CHEBI:58115"/>
    </ligand>
</feature>
<feature type="binding site" evidence="1">
    <location>
        <position position="194"/>
    </location>
    <ligand>
        <name>GMP</name>
        <dbReference type="ChEBI" id="CHEBI:58115"/>
    </ligand>
</feature>
<feature type="binding site" evidence="1">
    <location>
        <position position="194"/>
    </location>
    <ligand>
        <name>Mg(2+)</name>
        <dbReference type="ChEBI" id="CHEBI:18420"/>
    </ligand>
</feature>
<comment type="function">
    <text evidence="1">Converts guanine to guanosine monophosphate, and hypoxanthine to inosine monophosphate. Transfers the 5-phosphoribosyl group from 5-phosphoribosylpyrophosphate onto the purine. Plays a central role in the generation of purine nucleotides through the purine salvage pathway (By similarity).</text>
</comment>
<comment type="catalytic activity">
    <reaction evidence="2">
        <text>IMP + diphosphate = hypoxanthine + 5-phospho-alpha-D-ribose 1-diphosphate</text>
        <dbReference type="Rhea" id="RHEA:17973"/>
        <dbReference type="ChEBI" id="CHEBI:17368"/>
        <dbReference type="ChEBI" id="CHEBI:33019"/>
        <dbReference type="ChEBI" id="CHEBI:58017"/>
        <dbReference type="ChEBI" id="CHEBI:58053"/>
        <dbReference type="EC" id="2.4.2.8"/>
    </reaction>
    <physiologicalReaction direction="right-to-left" evidence="2">
        <dbReference type="Rhea" id="RHEA:17975"/>
    </physiologicalReaction>
</comment>
<comment type="catalytic activity">
    <reaction evidence="2">
        <text>GMP + diphosphate = guanine + 5-phospho-alpha-D-ribose 1-diphosphate</text>
        <dbReference type="Rhea" id="RHEA:25424"/>
        <dbReference type="ChEBI" id="CHEBI:16235"/>
        <dbReference type="ChEBI" id="CHEBI:33019"/>
        <dbReference type="ChEBI" id="CHEBI:58017"/>
        <dbReference type="ChEBI" id="CHEBI:58115"/>
        <dbReference type="EC" id="2.4.2.8"/>
    </reaction>
    <physiologicalReaction direction="right-to-left" evidence="2">
        <dbReference type="Rhea" id="RHEA:25426"/>
    </physiologicalReaction>
</comment>
<comment type="cofactor">
    <cofactor evidence="1">
        <name>Mg(2+)</name>
        <dbReference type="ChEBI" id="CHEBI:18420"/>
    </cofactor>
    <text evidence="1">Binds 2 magnesium ions per subunit. The magnesium ions are essentially bound to the substrate and have few direct interactions with the protein.</text>
</comment>
<comment type="pathway">
    <text>Purine metabolism; IMP biosynthesis via salvage pathway; IMP from hypoxanthine: step 1/1.</text>
</comment>
<comment type="subunit">
    <text evidence="1">Homotetramer.</text>
</comment>
<comment type="subcellular location">
    <subcellularLocation>
        <location>Cytoplasm</location>
    </subcellularLocation>
</comment>
<comment type="similarity">
    <text evidence="3">Belongs to the purine/pyrimidine phosphoribosyltransferase family.</text>
</comment>
<sequence length="218" mass="24609">MATHSPCIVIGDDEQGYDLDLFCIPKHYADDLEKVYIPHGLIMDRTERLAREIMKGMGGHHIVALCVLKGGYKFFADLLDYIKALNRNSDKSIPMTVDFIRLKSYCNDQSTGDIKVIGGDDLSTLTGKNVLIVEDIIDTGKTMKTLLSLLKQYNPKMVKVASLLVKRTPRSVGYRPDFVGFEVPDKFVVGYALDYNEYFRDLNHICVISETGKQKYKA</sequence>
<proteinExistence type="evidence at transcript level"/>
<keyword id="KW-0963">Cytoplasm</keyword>
<keyword id="KW-0328">Glycosyltransferase</keyword>
<keyword id="KW-0460">Magnesium</keyword>
<keyword id="KW-0479">Metal-binding</keyword>
<keyword id="KW-0547">Nucleotide-binding</keyword>
<keyword id="KW-0660">Purine salvage</keyword>
<keyword id="KW-1185">Reference proteome</keyword>
<keyword id="KW-0808">Transferase</keyword>
<evidence type="ECO:0000250" key="1"/>
<evidence type="ECO:0000250" key="2">
    <source>
        <dbReference type="UniProtKB" id="P00492"/>
    </source>
</evidence>
<evidence type="ECO:0000305" key="3"/>
<name>HPRT_CHICK</name>
<reference key="1">
    <citation type="journal article" date="1999" name="Nucleic Acids Res.">
        <title>The chicken HPRT gene: a counter selectable marker for the DT40 cell line.</title>
        <authorList>
            <person name="Fukagawa T."/>
            <person name="Hayward N."/>
            <person name="Yang J."/>
            <person name="Azzalin C."/>
            <person name="Griffin D."/>
            <person name="Stewart A.F."/>
            <person name="Brown W."/>
        </authorList>
    </citation>
    <scope>NUCLEOTIDE SEQUENCE [MRNA]</scope>
</reference>
<dbReference type="EC" id="2.4.2.8" evidence="2"/>
<dbReference type="EMBL" id="AJ132697">
    <property type="protein sequence ID" value="CAB46657.1"/>
    <property type="molecule type" value="mRNA"/>
</dbReference>
<dbReference type="RefSeq" id="NP_990179.1">
    <property type="nucleotide sequence ID" value="NM_204848.2"/>
</dbReference>
<dbReference type="SMR" id="Q9W719"/>
<dbReference type="FunCoup" id="Q9W719">
    <property type="interactions" value="1619"/>
</dbReference>
<dbReference type="STRING" id="9031.ENSGALP00000009829"/>
<dbReference type="PaxDb" id="9031-ENSGALP00000009829"/>
<dbReference type="Ensembl" id="ENSGALT00000126594">
    <property type="protein sequence ID" value="ENSGALP00000090761"/>
    <property type="gene ID" value="ENSGALG00000006098"/>
</dbReference>
<dbReference type="Ensembl" id="ENSGALT00010037920.1">
    <property type="protein sequence ID" value="ENSGALP00010021882.1"/>
    <property type="gene ID" value="ENSGALG00010015742.1"/>
</dbReference>
<dbReference type="GeneID" id="395653"/>
<dbReference type="KEGG" id="gga:395653"/>
<dbReference type="CTD" id="3251"/>
<dbReference type="VEuPathDB" id="HostDB:geneid_395653"/>
<dbReference type="eggNOG" id="KOG3367">
    <property type="taxonomic scope" value="Eukaryota"/>
</dbReference>
<dbReference type="GeneTree" id="ENSGT00940000155028"/>
<dbReference type="InParanoid" id="Q9W719"/>
<dbReference type="OMA" id="MQWRVAP"/>
<dbReference type="OrthoDB" id="9449045at2759"/>
<dbReference type="PhylomeDB" id="Q9W719"/>
<dbReference type="UniPathway" id="UPA00591">
    <property type="reaction ID" value="UER00648"/>
</dbReference>
<dbReference type="PRO" id="PR:Q9W719"/>
<dbReference type="Proteomes" id="UP000000539">
    <property type="component" value="Chromosome 4"/>
</dbReference>
<dbReference type="GO" id="GO:0005694">
    <property type="term" value="C:chromosome"/>
    <property type="evidence" value="ECO:0000314"/>
    <property type="project" value="AgBase"/>
</dbReference>
<dbReference type="GO" id="GO:0005737">
    <property type="term" value="C:cytoplasm"/>
    <property type="evidence" value="ECO:0000250"/>
    <property type="project" value="UniProtKB"/>
</dbReference>
<dbReference type="GO" id="GO:0002057">
    <property type="term" value="F:guanine binding"/>
    <property type="evidence" value="ECO:0000314"/>
    <property type="project" value="AgBase"/>
</dbReference>
<dbReference type="GO" id="GO:0052657">
    <property type="term" value="F:guanine phosphoribosyltransferase activity"/>
    <property type="evidence" value="ECO:0000250"/>
    <property type="project" value="UniProtKB"/>
</dbReference>
<dbReference type="GO" id="GO:0004422">
    <property type="term" value="F:hypoxanthine phosphoribosyltransferase activity"/>
    <property type="evidence" value="ECO:0000314"/>
    <property type="project" value="AgBase"/>
</dbReference>
<dbReference type="GO" id="GO:0042802">
    <property type="term" value="F:identical protein binding"/>
    <property type="evidence" value="ECO:0000250"/>
    <property type="project" value="UniProtKB"/>
</dbReference>
<dbReference type="GO" id="GO:0000287">
    <property type="term" value="F:magnesium ion binding"/>
    <property type="evidence" value="ECO:0000250"/>
    <property type="project" value="UniProtKB"/>
</dbReference>
<dbReference type="GO" id="GO:0000166">
    <property type="term" value="F:nucleotide binding"/>
    <property type="evidence" value="ECO:0007669"/>
    <property type="project" value="UniProtKB-KW"/>
</dbReference>
<dbReference type="GO" id="GO:0002060">
    <property type="term" value="F:purine nucleobase binding"/>
    <property type="evidence" value="ECO:0000314"/>
    <property type="project" value="AgBase"/>
</dbReference>
<dbReference type="GO" id="GO:0046038">
    <property type="term" value="P:GMP catabolic process"/>
    <property type="evidence" value="ECO:0000250"/>
    <property type="project" value="UniProtKB"/>
</dbReference>
<dbReference type="GO" id="GO:0006178">
    <property type="term" value="P:guanine salvage"/>
    <property type="evidence" value="ECO:0000250"/>
    <property type="project" value="UniProtKB"/>
</dbReference>
<dbReference type="GO" id="GO:0046100">
    <property type="term" value="P:hypoxanthine metabolic process"/>
    <property type="evidence" value="ECO:0000250"/>
    <property type="project" value="UniProtKB"/>
</dbReference>
<dbReference type="GO" id="GO:0043103">
    <property type="term" value="P:hypoxanthine salvage"/>
    <property type="evidence" value="ECO:0000250"/>
    <property type="project" value="UniProtKB"/>
</dbReference>
<dbReference type="GO" id="GO:0046040">
    <property type="term" value="P:IMP metabolic process"/>
    <property type="evidence" value="ECO:0000250"/>
    <property type="project" value="UniProtKB"/>
</dbReference>
<dbReference type="GO" id="GO:0032264">
    <property type="term" value="P:IMP salvage"/>
    <property type="evidence" value="ECO:0007669"/>
    <property type="project" value="UniProtKB-UniPathway"/>
</dbReference>
<dbReference type="GO" id="GO:0045964">
    <property type="term" value="P:positive regulation of dopamine metabolic process"/>
    <property type="evidence" value="ECO:0000250"/>
    <property type="project" value="UniProtKB"/>
</dbReference>
<dbReference type="GO" id="GO:0006164">
    <property type="term" value="P:purine nucleotide biosynthetic process"/>
    <property type="evidence" value="ECO:0000250"/>
    <property type="project" value="UniProtKB"/>
</dbReference>
<dbReference type="GO" id="GO:0006166">
    <property type="term" value="P:purine ribonucleoside salvage"/>
    <property type="evidence" value="ECO:0000250"/>
    <property type="project" value="UniProtKB"/>
</dbReference>
<dbReference type="CDD" id="cd06223">
    <property type="entry name" value="PRTases_typeI"/>
    <property type="match status" value="1"/>
</dbReference>
<dbReference type="FunFam" id="3.40.50.2020:FF:000019">
    <property type="entry name" value="Hypoxanthine phosphoribosyltransferase"/>
    <property type="match status" value="1"/>
</dbReference>
<dbReference type="Gene3D" id="3.40.50.2020">
    <property type="match status" value="1"/>
</dbReference>
<dbReference type="InterPro" id="IPR050408">
    <property type="entry name" value="HGPRT"/>
</dbReference>
<dbReference type="InterPro" id="IPR005904">
    <property type="entry name" value="Hxn_phspho_trans"/>
</dbReference>
<dbReference type="InterPro" id="IPR000836">
    <property type="entry name" value="PRibTrfase_dom"/>
</dbReference>
<dbReference type="InterPro" id="IPR029057">
    <property type="entry name" value="PRTase-like"/>
</dbReference>
<dbReference type="NCBIfam" id="TIGR01203">
    <property type="entry name" value="HGPRTase"/>
    <property type="match status" value="1"/>
</dbReference>
<dbReference type="PANTHER" id="PTHR43340">
    <property type="entry name" value="HYPOXANTHINE-GUANINE PHOSPHORIBOSYLTRANSFERASE"/>
    <property type="match status" value="1"/>
</dbReference>
<dbReference type="PANTHER" id="PTHR43340:SF6">
    <property type="entry name" value="HYPOXANTHINE-GUANINE PHOSPHORIBOSYLTRANSFERASE"/>
    <property type="match status" value="1"/>
</dbReference>
<dbReference type="Pfam" id="PF00156">
    <property type="entry name" value="Pribosyltran"/>
    <property type="match status" value="1"/>
</dbReference>
<dbReference type="SUPFAM" id="SSF53271">
    <property type="entry name" value="PRTase-like"/>
    <property type="match status" value="1"/>
</dbReference>
<dbReference type="PROSITE" id="PS00103">
    <property type="entry name" value="PUR_PYR_PR_TRANSFER"/>
    <property type="match status" value="1"/>
</dbReference>
<protein>
    <recommendedName>
        <fullName>Hypoxanthine-guanine phosphoribosyltransferase</fullName>
        <shortName>HGPRT</shortName>
        <shortName>HGPRTase</shortName>
        <ecNumber evidence="2">2.4.2.8</ecNumber>
    </recommendedName>
</protein>
<gene>
    <name type="primary">HPRT1</name>
    <name type="synonym">HPRT</name>
</gene>